<sequence length="1185" mass="133190">MLELNNFDSIRIGLASPDKIRQWSSGEVKKPETINYRTLKPERDGLFCERIFGPTRDWECHCGKYKRVRYKGVVCDRCGVEVTRSKVRRERLGHIELAAPVSHIWYFKGIPSRMGLLLDMSPRALEKVLYFVSYIVIEPGDTPLLKKQLLTETEYREYRDKFGNNFKAGMGAEAIKVLLVEINLEELARELRQELKEVSGQRKIRAIRRLEVVEAFKKSGNRPEWMIMDVVPVIPPELRPMVQLDGGRFATSDLNDLYRRVINRNNRLKRLLDLGAPDIIVRNEKRMLQEAVDALIDNGRRGRPVTGPGNRPLKSLSDMLKGKQGRFRQNLLGKRVDYSGRSVIVVGPRLKMHQCGLPKEMALELFKPFVMKKLVNDGHAHNIKSAKRMVERVRPEVWDVLEDVIKEHPVMLNRAPTLHRLGIQAFEPVLVEGRAIKIHPMVCTAYNADFDGDQMAVHVPLSAEAQAEARLLMLAANNILNPKDGKPVASPTQDMVLGSYYLTMDRDGDLGEGLIFKDEQEAMLAYDNKQVSLQAKITVRRKNGERLQTTVGRIIFNEVIPEELGYINKVCDKKTLSKIVADCYRRLGNAHTAELLDGIKELGYKYSTRAGITIGVPDITIPEAKKEILAKAEEQVNKIETQFRRGLITEDERYRKVIGIWNDATDKVTKALMATLDKFNNVYMMATSGARGNIQQIRQLAGMRGLMADPSGRIIDLPIKANFREGLTVLEYFISTHGARKGLADTALRTADSGYLTRRLVDVAQDVIVREDDCGTTEGIEVREIRDGTEGIEKLHERLEGRVPMEVVVHPETGEVLISQEQVDNHQVMTEEQAQAIEDAGIEKVKIRSVITCKTRYGVCKHCYGKNLATGGNIDIGEAVGIIAAQSIGEPGTQLTMRTFHTGGVAGDDITQGLPRVEELFEARRPKGQAIVAEEDGSIAIREVKGRREIEITKDNGEKNVYAVPFGARIKVKEGQRIEAGDELTEGSVNPHDLLKIKGPAGVQVYLLQEVQRVYRLQGVEINDKHIEVMIRQMLRKVKIEEAGDTELLPGGLIDIFEFEEENRKAVEQGGEPAVAKPVLLGITKASLATDSFLSAASFQETTRVLTEAAIKGKMDPLLGLKENVIIGKLVPAGTGMSRYRNIEVLEEGQPFLEEDRDILLPERDRDYNFLSDEEKIDFDLTLEK</sequence>
<name>RPOC_DESRM</name>
<feature type="chain" id="PRO_0000353347" description="DNA-directed RNA polymerase subunit beta'">
    <location>
        <begin position="1"/>
        <end position="1185"/>
    </location>
</feature>
<feature type="binding site" evidence="1">
    <location>
        <position position="60"/>
    </location>
    <ligand>
        <name>Zn(2+)</name>
        <dbReference type="ChEBI" id="CHEBI:29105"/>
        <label>1</label>
    </ligand>
</feature>
<feature type="binding site" evidence="1">
    <location>
        <position position="62"/>
    </location>
    <ligand>
        <name>Zn(2+)</name>
        <dbReference type="ChEBI" id="CHEBI:29105"/>
        <label>1</label>
    </ligand>
</feature>
<feature type="binding site" evidence="1">
    <location>
        <position position="75"/>
    </location>
    <ligand>
        <name>Zn(2+)</name>
        <dbReference type="ChEBI" id="CHEBI:29105"/>
        <label>1</label>
    </ligand>
</feature>
<feature type="binding site" evidence="1">
    <location>
        <position position="78"/>
    </location>
    <ligand>
        <name>Zn(2+)</name>
        <dbReference type="ChEBI" id="CHEBI:29105"/>
        <label>1</label>
    </ligand>
</feature>
<feature type="binding site" evidence="1">
    <location>
        <position position="449"/>
    </location>
    <ligand>
        <name>Mg(2+)</name>
        <dbReference type="ChEBI" id="CHEBI:18420"/>
    </ligand>
</feature>
<feature type="binding site" evidence="1">
    <location>
        <position position="451"/>
    </location>
    <ligand>
        <name>Mg(2+)</name>
        <dbReference type="ChEBI" id="CHEBI:18420"/>
    </ligand>
</feature>
<feature type="binding site" evidence="1">
    <location>
        <position position="453"/>
    </location>
    <ligand>
        <name>Mg(2+)</name>
        <dbReference type="ChEBI" id="CHEBI:18420"/>
    </ligand>
</feature>
<feature type="binding site" evidence="1">
    <location>
        <position position="774"/>
    </location>
    <ligand>
        <name>Zn(2+)</name>
        <dbReference type="ChEBI" id="CHEBI:29105"/>
        <label>2</label>
    </ligand>
</feature>
<feature type="binding site" evidence="1">
    <location>
        <position position="853"/>
    </location>
    <ligand>
        <name>Zn(2+)</name>
        <dbReference type="ChEBI" id="CHEBI:29105"/>
        <label>2</label>
    </ligand>
</feature>
<feature type="binding site" evidence="1">
    <location>
        <position position="860"/>
    </location>
    <ligand>
        <name>Zn(2+)</name>
        <dbReference type="ChEBI" id="CHEBI:29105"/>
        <label>2</label>
    </ligand>
</feature>
<feature type="binding site" evidence="1">
    <location>
        <position position="863"/>
    </location>
    <ligand>
        <name>Zn(2+)</name>
        <dbReference type="ChEBI" id="CHEBI:29105"/>
        <label>2</label>
    </ligand>
</feature>
<gene>
    <name evidence="1" type="primary">rpoC</name>
    <name type="ordered locus">Dred_0208</name>
</gene>
<organism>
    <name type="scientific">Desulforamulus reducens (strain ATCC BAA-1160 / DSM 100696 / MI-1)</name>
    <name type="common">Desulfotomaculum reducens</name>
    <dbReference type="NCBI Taxonomy" id="349161"/>
    <lineage>
        <taxon>Bacteria</taxon>
        <taxon>Bacillati</taxon>
        <taxon>Bacillota</taxon>
        <taxon>Clostridia</taxon>
        <taxon>Eubacteriales</taxon>
        <taxon>Peptococcaceae</taxon>
        <taxon>Desulforamulus</taxon>
    </lineage>
</organism>
<comment type="function">
    <text evidence="1">DNA-dependent RNA polymerase catalyzes the transcription of DNA into RNA using the four ribonucleoside triphosphates as substrates.</text>
</comment>
<comment type="catalytic activity">
    <reaction evidence="1">
        <text>RNA(n) + a ribonucleoside 5'-triphosphate = RNA(n+1) + diphosphate</text>
        <dbReference type="Rhea" id="RHEA:21248"/>
        <dbReference type="Rhea" id="RHEA-COMP:14527"/>
        <dbReference type="Rhea" id="RHEA-COMP:17342"/>
        <dbReference type="ChEBI" id="CHEBI:33019"/>
        <dbReference type="ChEBI" id="CHEBI:61557"/>
        <dbReference type="ChEBI" id="CHEBI:140395"/>
        <dbReference type="EC" id="2.7.7.6"/>
    </reaction>
</comment>
<comment type="cofactor">
    <cofactor evidence="1">
        <name>Mg(2+)</name>
        <dbReference type="ChEBI" id="CHEBI:18420"/>
    </cofactor>
    <text evidence="1">Binds 1 Mg(2+) ion per subunit.</text>
</comment>
<comment type="cofactor">
    <cofactor evidence="1">
        <name>Zn(2+)</name>
        <dbReference type="ChEBI" id="CHEBI:29105"/>
    </cofactor>
    <text evidence="1">Binds 2 Zn(2+) ions per subunit.</text>
</comment>
<comment type="subunit">
    <text evidence="1">The RNAP catalytic core consists of 2 alpha, 1 beta, 1 beta' and 1 omega subunit. When a sigma factor is associated with the core the holoenzyme is formed, which can initiate transcription.</text>
</comment>
<comment type="similarity">
    <text evidence="1">Belongs to the RNA polymerase beta' chain family.</text>
</comment>
<evidence type="ECO:0000255" key="1">
    <source>
        <dbReference type="HAMAP-Rule" id="MF_01322"/>
    </source>
</evidence>
<reference key="1">
    <citation type="submission" date="2007-03" db="EMBL/GenBank/DDBJ databases">
        <title>Complete sequence of Desulfotomaculum reducens MI-1.</title>
        <authorList>
            <consortium name="US DOE Joint Genome Institute"/>
            <person name="Copeland A."/>
            <person name="Lucas S."/>
            <person name="Lapidus A."/>
            <person name="Barry K."/>
            <person name="Detter J.C."/>
            <person name="Glavina del Rio T."/>
            <person name="Hammon N."/>
            <person name="Israni S."/>
            <person name="Dalin E."/>
            <person name="Tice H."/>
            <person name="Pitluck S."/>
            <person name="Sims D."/>
            <person name="Brettin T."/>
            <person name="Bruce D."/>
            <person name="Han C."/>
            <person name="Tapia R."/>
            <person name="Schmutz J."/>
            <person name="Larimer F."/>
            <person name="Land M."/>
            <person name="Hauser L."/>
            <person name="Kyrpides N."/>
            <person name="Kim E."/>
            <person name="Tebo B.M."/>
            <person name="Richardson P."/>
        </authorList>
    </citation>
    <scope>NUCLEOTIDE SEQUENCE [LARGE SCALE GENOMIC DNA]</scope>
    <source>
        <strain>ATCC BAA-1160 / DSM 100696 / MI-1</strain>
    </source>
</reference>
<dbReference type="EC" id="2.7.7.6" evidence="1"/>
<dbReference type="EMBL" id="CP000612">
    <property type="protein sequence ID" value="ABO48757.1"/>
    <property type="molecule type" value="Genomic_DNA"/>
</dbReference>
<dbReference type="RefSeq" id="WP_011876598.1">
    <property type="nucleotide sequence ID" value="NC_009253.1"/>
</dbReference>
<dbReference type="SMR" id="A4J104"/>
<dbReference type="STRING" id="349161.Dred_0208"/>
<dbReference type="KEGG" id="drm:Dred_0208"/>
<dbReference type="eggNOG" id="COG0086">
    <property type="taxonomic scope" value="Bacteria"/>
</dbReference>
<dbReference type="HOGENOM" id="CLU_000524_3_1_9"/>
<dbReference type="OrthoDB" id="9815296at2"/>
<dbReference type="Proteomes" id="UP000001556">
    <property type="component" value="Chromosome"/>
</dbReference>
<dbReference type="GO" id="GO:0000428">
    <property type="term" value="C:DNA-directed RNA polymerase complex"/>
    <property type="evidence" value="ECO:0007669"/>
    <property type="project" value="UniProtKB-KW"/>
</dbReference>
<dbReference type="GO" id="GO:0003677">
    <property type="term" value="F:DNA binding"/>
    <property type="evidence" value="ECO:0007669"/>
    <property type="project" value="UniProtKB-UniRule"/>
</dbReference>
<dbReference type="GO" id="GO:0003899">
    <property type="term" value="F:DNA-directed RNA polymerase activity"/>
    <property type="evidence" value="ECO:0007669"/>
    <property type="project" value="UniProtKB-UniRule"/>
</dbReference>
<dbReference type="GO" id="GO:0000287">
    <property type="term" value="F:magnesium ion binding"/>
    <property type="evidence" value="ECO:0007669"/>
    <property type="project" value="UniProtKB-UniRule"/>
</dbReference>
<dbReference type="GO" id="GO:0008270">
    <property type="term" value="F:zinc ion binding"/>
    <property type="evidence" value="ECO:0007669"/>
    <property type="project" value="UniProtKB-UniRule"/>
</dbReference>
<dbReference type="GO" id="GO:0006351">
    <property type="term" value="P:DNA-templated transcription"/>
    <property type="evidence" value="ECO:0007669"/>
    <property type="project" value="UniProtKB-UniRule"/>
</dbReference>
<dbReference type="CDD" id="cd02655">
    <property type="entry name" value="RNAP_beta'_C"/>
    <property type="match status" value="1"/>
</dbReference>
<dbReference type="CDD" id="cd01609">
    <property type="entry name" value="RNAP_beta'_N"/>
    <property type="match status" value="1"/>
</dbReference>
<dbReference type="FunFam" id="1.10.132.30:FF:000003">
    <property type="entry name" value="DNA-directed RNA polymerase subunit beta"/>
    <property type="match status" value="1"/>
</dbReference>
<dbReference type="FunFam" id="1.10.150.390:FF:000002">
    <property type="entry name" value="DNA-directed RNA polymerase subunit beta"/>
    <property type="match status" value="1"/>
</dbReference>
<dbReference type="FunFam" id="1.10.40.90:FF:000001">
    <property type="entry name" value="DNA-directed RNA polymerase subunit beta"/>
    <property type="match status" value="1"/>
</dbReference>
<dbReference type="FunFam" id="4.10.860.120:FF:000001">
    <property type="entry name" value="DNA-directed RNA polymerase subunit beta"/>
    <property type="match status" value="1"/>
</dbReference>
<dbReference type="Gene3D" id="1.10.132.30">
    <property type="match status" value="1"/>
</dbReference>
<dbReference type="Gene3D" id="1.10.150.390">
    <property type="match status" value="1"/>
</dbReference>
<dbReference type="Gene3D" id="1.10.1790.20">
    <property type="match status" value="1"/>
</dbReference>
<dbReference type="Gene3D" id="1.10.40.90">
    <property type="match status" value="1"/>
</dbReference>
<dbReference type="Gene3D" id="2.40.40.20">
    <property type="match status" value="1"/>
</dbReference>
<dbReference type="Gene3D" id="2.40.50.100">
    <property type="match status" value="1"/>
</dbReference>
<dbReference type="Gene3D" id="4.10.860.120">
    <property type="entry name" value="RNA polymerase II, clamp domain"/>
    <property type="match status" value="1"/>
</dbReference>
<dbReference type="Gene3D" id="1.10.274.100">
    <property type="entry name" value="RNA polymerase Rpb1, domain 3"/>
    <property type="match status" value="2"/>
</dbReference>
<dbReference type="HAMAP" id="MF_01322">
    <property type="entry name" value="RNApol_bact_RpoC"/>
    <property type="match status" value="1"/>
</dbReference>
<dbReference type="InterPro" id="IPR045867">
    <property type="entry name" value="DNA-dir_RpoC_beta_prime"/>
</dbReference>
<dbReference type="InterPro" id="IPR012754">
    <property type="entry name" value="DNA-dir_RpoC_beta_prime_bact"/>
</dbReference>
<dbReference type="InterPro" id="IPR000722">
    <property type="entry name" value="RNA_pol_asu"/>
</dbReference>
<dbReference type="InterPro" id="IPR006592">
    <property type="entry name" value="RNA_pol_N"/>
</dbReference>
<dbReference type="InterPro" id="IPR007080">
    <property type="entry name" value="RNA_pol_Rpb1_1"/>
</dbReference>
<dbReference type="InterPro" id="IPR007066">
    <property type="entry name" value="RNA_pol_Rpb1_3"/>
</dbReference>
<dbReference type="InterPro" id="IPR042102">
    <property type="entry name" value="RNA_pol_Rpb1_3_sf"/>
</dbReference>
<dbReference type="InterPro" id="IPR007083">
    <property type="entry name" value="RNA_pol_Rpb1_4"/>
</dbReference>
<dbReference type="InterPro" id="IPR007081">
    <property type="entry name" value="RNA_pol_Rpb1_5"/>
</dbReference>
<dbReference type="InterPro" id="IPR044893">
    <property type="entry name" value="RNA_pol_Rpb1_clamp_domain"/>
</dbReference>
<dbReference type="InterPro" id="IPR038120">
    <property type="entry name" value="Rpb1_funnel_sf"/>
</dbReference>
<dbReference type="NCBIfam" id="NF011498">
    <property type="entry name" value="PRK14906.1"/>
    <property type="match status" value="1"/>
</dbReference>
<dbReference type="NCBIfam" id="TIGR02386">
    <property type="entry name" value="rpoC_TIGR"/>
    <property type="match status" value="1"/>
</dbReference>
<dbReference type="PANTHER" id="PTHR19376">
    <property type="entry name" value="DNA-DIRECTED RNA POLYMERASE"/>
    <property type="match status" value="1"/>
</dbReference>
<dbReference type="PANTHER" id="PTHR19376:SF54">
    <property type="entry name" value="DNA-DIRECTED RNA POLYMERASE SUBUNIT BETA"/>
    <property type="match status" value="1"/>
</dbReference>
<dbReference type="Pfam" id="PF04997">
    <property type="entry name" value="RNA_pol_Rpb1_1"/>
    <property type="match status" value="1"/>
</dbReference>
<dbReference type="Pfam" id="PF00623">
    <property type="entry name" value="RNA_pol_Rpb1_2"/>
    <property type="match status" value="1"/>
</dbReference>
<dbReference type="Pfam" id="PF04983">
    <property type="entry name" value="RNA_pol_Rpb1_3"/>
    <property type="match status" value="1"/>
</dbReference>
<dbReference type="Pfam" id="PF05000">
    <property type="entry name" value="RNA_pol_Rpb1_4"/>
    <property type="match status" value="1"/>
</dbReference>
<dbReference type="Pfam" id="PF04998">
    <property type="entry name" value="RNA_pol_Rpb1_5"/>
    <property type="match status" value="2"/>
</dbReference>
<dbReference type="SMART" id="SM00663">
    <property type="entry name" value="RPOLA_N"/>
    <property type="match status" value="1"/>
</dbReference>
<dbReference type="SUPFAM" id="SSF64484">
    <property type="entry name" value="beta and beta-prime subunits of DNA dependent RNA-polymerase"/>
    <property type="match status" value="1"/>
</dbReference>
<accession>A4J104</accession>
<keyword id="KW-0240">DNA-directed RNA polymerase</keyword>
<keyword id="KW-0460">Magnesium</keyword>
<keyword id="KW-0479">Metal-binding</keyword>
<keyword id="KW-0548">Nucleotidyltransferase</keyword>
<keyword id="KW-1185">Reference proteome</keyword>
<keyword id="KW-0804">Transcription</keyword>
<keyword id="KW-0808">Transferase</keyword>
<keyword id="KW-0862">Zinc</keyword>
<proteinExistence type="inferred from homology"/>
<protein>
    <recommendedName>
        <fullName evidence="1">DNA-directed RNA polymerase subunit beta'</fullName>
        <shortName evidence="1">RNAP subunit beta'</shortName>
        <ecNumber evidence="1">2.7.7.6</ecNumber>
    </recommendedName>
    <alternativeName>
        <fullName evidence="1">RNA polymerase subunit beta'</fullName>
    </alternativeName>
    <alternativeName>
        <fullName evidence="1">Transcriptase subunit beta'</fullName>
    </alternativeName>
</protein>